<accession>Q6G424</accession>
<comment type="function">
    <text evidence="1">The UvrABC repair system catalyzes the recognition and processing of DNA lesions. UvrC both incises the 5' and 3' sides of the lesion. The N-terminal half is responsible for the 3' incision and the C-terminal half is responsible for the 5' incision.</text>
</comment>
<comment type="subunit">
    <text evidence="1">Interacts with UvrB in an incision complex.</text>
</comment>
<comment type="subcellular location">
    <subcellularLocation>
        <location evidence="1">Cytoplasm</location>
    </subcellularLocation>
</comment>
<comment type="similarity">
    <text evidence="1">Belongs to the UvrC family.</text>
</comment>
<evidence type="ECO:0000255" key="1">
    <source>
        <dbReference type="HAMAP-Rule" id="MF_00203"/>
    </source>
</evidence>
<feature type="chain" id="PRO_0000264867" description="UvrABC system protein C">
    <location>
        <begin position="1"/>
        <end position="661"/>
    </location>
</feature>
<feature type="domain" description="GIY-YIG" evidence="1">
    <location>
        <begin position="52"/>
        <end position="130"/>
    </location>
</feature>
<feature type="domain" description="UVR" evidence="1">
    <location>
        <begin position="240"/>
        <end position="275"/>
    </location>
</feature>
<name>UVRC_BARHE</name>
<organism>
    <name type="scientific">Bartonella henselae (strain ATCC 49882 / DSM 28221 / CCUG 30454 / Houston 1)</name>
    <name type="common">Rochalimaea henselae</name>
    <dbReference type="NCBI Taxonomy" id="283166"/>
    <lineage>
        <taxon>Bacteria</taxon>
        <taxon>Pseudomonadati</taxon>
        <taxon>Pseudomonadota</taxon>
        <taxon>Alphaproteobacteria</taxon>
        <taxon>Hyphomicrobiales</taxon>
        <taxon>Bartonellaceae</taxon>
        <taxon>Bartonella</taxon>
    </lineage>
</organism>
<sequence length="661" mass="75293">MILKNNIAYAENEQEKLSFLSHITWDDAHQRNDKNQFKGAKLIQEFVKHLPHKPGVYRMVDENGKVLYVGKARNLKKRVSNYTREQGHNNRITRMIRATSHMEFVVTHTEIEALLLEANLIKRLHPRFNVLLRDDKSFPYIIITDDHRAPALYKHRGARTRKAHYFGPFASSSAVTQTINVLQRAFLLRTCTDSVLENRTRPCLLYQIKRCSAPCTHEISDRDYRELVKGAKSFLSGKSQSIKNDMVQAMHKAAKNFDFEQAAAYRDRLSALSHIQSHQGINPQTIEEADVFAIAQKEGISCIQVFFFRMGQNWGNRAYFPKADPSFSSSEILASFLSQFYDDKPLPKLILLSESIEDKTLLAEAFSLKANRKISLSLPKQGERKTLVNYAYINAHETLGHKLAETATHTKLFQGIAEIFQLPHTPCRIEIYDNSHIMGTNAVGAMIVAGKNGFIKNQYRKFNIRSTDITPGDDFGMMKEVIKRRFSRLIKEHGLPHESKNIQSKDDASFPIWPDLILIDGGKGQINSVHTILSELGLDNFMTVVGIAKGADRRAGRERFFIKGKTPFTLPPCDPILYFLQRLRDEAHRFAIGTHRAKRKKETLKNPLDEIENIGPTRKRALLHHFGSAKAIASASLEDLTKVIGISTTIAQKIYNHFNEK</sequence>
<reference key="1">
    <citation type="journal article" date="2004" name="Proc. Natl. Acad. Sci. U.S.A.">
        <title>The louse-borne human pathogen Bartonella quintana is a genomic derivative of the zoonotic agent Bartonella henselae.</title>
        <authorList>
            <person name="Alsmark U.C.M."/>
            <person name="Frank A.C."/>
            <person name="Karlberg E.O."/>
            <person name="Legault B.-A."/>
            <person name="Ardell D.H."/>
            <person name="Canbaeck B."/>
            <person name="Eriksson A.-S."/>
            <person name="Naeslund A.K."/>
            <person name="Handley S.A."/>
            <person name="Huvet M."/>
            <person name="La Scola B."/>
            <person name="Holmberg M."/>
            <person name="Andersson S.G.E."/>
        </authorList>
    </citation>
    <scope>NUCLEOTIDE SEQUENCE [LARGE SCALE GENOMIC DNA]</scope>
    <source>
        <strain>ATCC 49882 / DSM 28221 / CCUG 30454 / Houston 1</strain>
    </source>
</reference>
<keyword id="KW-0963">Cytoplasm</keyword>
<keyword id="KW-0227">DNA damage</keyword>
<keyword id="KW-0228">DNA excision</keyword>
<keyword id="KW-0234">DNA repair</keyword>
<keyword id="KW-0267">Excision nuclease</keyword>
<keyword id="KW-0742">SOS response</keyword>
<gene>
    <name evidence="1" type="primary">uvrC</name>
    <name type="ordered locus">BH05550</name>
</gene>
<dbReference type="EMBL" id="BX897699">
    <property type="protein sequence ID" value="CAF27363.1"/>
    <property type="molecule type" value="Genomic_DNA"/>
</dbReference>
<dbReference type="RefSeq" id="WP_011180485.1">
    <property type="nucleotide sequence ID" value="NZ_LRIJ02000001.1"/>
</dbReference>
<dbReference type="SMR" id="Q6G424"/>
<dbReference type="PaxDb" id="283166-BH05550"/>
<dbReference type="EnsemblBacteria" id="CAF27363">
    <property type="protein sequence ID" value="CAF27363"/>
    <property type="gene ID" value="BH05550"/>
</dbReference>
<dbReference type="GeneID" id="92985212"/>
<dbReference type="KEGG" id="bhe:BH05550"/>
<dbReference type="eggNOG" id="COG0322">
    <property type="taxonomic scope" value="Bacteria"/>
</dbReference>
<dbReference type="OrthoDB" id="9804933at2"/>
<dbReference type="Proteomes" id="UP000000421">
    <property type="component" value="Chromosome"/>
</dbReference>
<dbReference type="GO" id="GO:0005737">
    <property type="term" value="C:cytoplasm"/>
    <property type="evidence" value="ECO:0007669"/>
    <property type="project" value="UniProtKB-SubCell"/>
</dbReference>
<dbReference type="GO" id="GO:0009380">
    <property type="term" value="C:excinuclease repair complex"/>
    <property type="evidence" value="ECO:0007669"/>
    <property type="project" value="InterPro"/>
</dbReference>
<dbReference type="GO" id="GO:0003677">
    <property type="term" value="F:DNA binding"/>
    <property type="evidence" value="ECO:0007669"/>
    <property type="project" value="UniProtKB-UniRule"/>
</dbReference>
<dbReference type="GO" id="GO:0009381">
    <property type="term" value="F:excinuclease ABC activity"/>
    <property type="evidence" value="ECO:0007669"/>
    <property type="project" value="UniProtKB-UniRule"/>
</dbReference>
<dbReference type="GO" id="GO:0006289">
    <property type="term" value="P:nucleotide-excision repair"/>
    <property type="evidence" value="ECO:0007669"/>
    <property type="project" value="UniProtKB-UniRule"/>
</dbReference>
<dbReference type="GO" id="GO:0009432">
    <property type="term" value="P:SOS response"/>
    <property type="evidence" value="ECO:0007669"/>
    <property type="project" value="UniProtKB-UniRule"/>
</dbReference>
<dbReference type="CDD" id="cd10434">
    <property type="entry name" value="GIY-YIG_UvrC_Cho"/>
    <property type="match status" value="1"/>
</dbReference>
<dbReference type="FunFam" id="3.30.420.340:FF:000001">
    <property type="entry name" value="UvrABC system protein C"/>
    <property type="match status" value="1"/>
</dbReference>
<dbReference type="FunFam" id="3.40.1440.10:FF:000001">
    <property type="entry name" value="UvrABC system protein C"/>
    <property type="match status" value="1"/>
</dbReference>
<dbReference type="Gene3D" id="1.10.150.20">
    <property type="entry name" value="5' to 3' exonuclease, C-terminal subdomain"/>
    <property type="match status" value="1"/>
</dbReference>
<dbReference type="Gene3D" id="3.40.1440.10">
    <property type="entry name" value="GIY-YIG endonuclease"/>
    <property type="match status" value="1"/>
</dbReference>
<dbReference type="Gene3D" id="4.10.860.10">
    <property type="entry name" value="UVR domain"/>
    <property type="match status" value="1"/>
</dbReference>
<dbReference type="Gene3D" id="3.30.420.340">
    <property type="entry name" value="UvrC, RNAse H endonuclease domain"/>
    <property type="match status" value="1"/>
</dbReference>
<dbReference type="HAMAP" id="MF_00203">
    <property type="entry name" value="UvrC"/>
    <property type="match status" value="1"/>
</dbReference>
<dbReference type="InterPro" id="IPR000305">
    <property type="entry name" value="GIY-YIG_endonuc"/>
</dbReference>
<dbReference type="InterPro" id="IPR035901">
    <property type="entry name" value="GIY-YIG_endonuc_sf"/>
</dbReference>
<dbReference type="InterPro" id="IPR047296">
    <property type="entry name" value="GIY-YIG_UvrC_Cho"/>
</dbReference>
<dbReference type="InterPro" id="IPR003583">
    <property type="entry name" value="Hlx-hairpin-Hlx_DNA-bd_motif"/>
</dbReference>
<dbReference type="InterPro" id="IPR010994">
    <property type="entry name" value="RuvA_2-like"/>
</dbReference>
<dbReference type="InterPro" id="IPR001943">
    <property type="entry name" value="UVR_dom"/>
</dbReference>
<dbReference type="InterPro" id="IPR036876">
    <property type="entry name" value="UVR_dom_sf"/>
</dbReference>
<dbReference type="InterPro" id="IPR050066">
    <property type="entry name" value="UvrABC_protein_C"/>
</dbReference>
<dbReference type="InterPro" id="IPR004791">
    <property type="entry name" value="UvrC"/>
</dbReference>
<dbReference type="InterPro" id="IPR001162">
    <property type="entry name" value="UvrC_RNase_H_dom"/>
</dbReference>
<dbReference type="InterPro" id="IPR038476">
    <property type="entry name" value="UvrC_RNase_H_dom_sf"/>
</dbReference>
<dbReference type="NCBIfam" id="NF001824">
    <property type="entry name" value="PRK00558.1-5"/>
    <property type="match status" value="1"/>
</dbReference>
<dbReference type="NCBIfam" id="TIGR00194">
    <property type="entry name" value="uvrC"/>
    <property type="match status" value="1"/>
</dbReference>
<dbReference type="PANTHER" id="PTHR30562:SF1">
    <property type="entry name" value="UVRABC SYSTEM PROTEIN C"/>
    <property type="match status" value="1"/>
</dbReference>
<dbReference type="PANTHER" id="PTHR30562">
    <property type="entry name" value="UVRC/OXIDOREDUCTASE"/>
    <property type="match status" value="1"/>
</dbReference>
<dbReference type="Pfam" id="PF01541">
    <property type="entry name" value="GIY-YIG"/>
    <property type="match status" value="1"/>
</dbReference>
<dbReference type="Pfam" id="PF14520">
    <property type="entry name" value="HHH_5"/>
    <property type="match status" value="1"/>
</dbReference>
<dbReference type="Pfam" id="PF02151">
    <property type="entry name" value="UVR"/>
    <property type="match status" value="1"/>
</dbReference>
<dbReference type="Pfam" id="PF22920">
    <property type="entry name" value="UvrC_RNaseH"/>
    <property type="match status" value="1"/>
</dbReference>
<dbReference type="Pfam" id="PF08459">
    <property type="entry name" value="UvrC_RNaseH_dom"/>
    <property type="match status" value="1"/>
</dbReference>
<dbReference type="SMART" id="SM00465">
    <property type="entry name" value="GIYc"/>
    <property type="match status" value="1"/>
</dbReference>
<dbReference type="SMART" id="SM00278">
    <property type="entry name" value="HhH1"/>
    <property type="match status" value="2"/>
</dbReference>
<dbReference type="SUPFAM" id="SSF46600">
    <property type="entry name" value="C-terminal UvrC-binding domain of UvrB"/>
    <property type="match status" value="1"/>
</dbReference>
<dbReference type="SUPFAM" id="SSF82771">
    <property type="entry name" value="GIY-YIG endonuclease"/>
    <property type="match status" value="1"/>
</dbReference>
<dbReference type="SUPFAM" id="SSF47781">
    <property type="entry name" value="RuvA domain 2-like"/>
    <property type="match status" value="1"/>
</dbReference>
<dbReference type="PROSITE" id="PS50164">
    <property type="entry name" value="GIY_YIG"/>
    <property type="match status" value="1"/>
</dbReference>
<dbReference type="PROSITE" id="PS50151">
    <property type="entry name" value="UVR"/>
    <property type="match status" value="1"/>
</dbReference>
<dbReference type="PROSITE" id="PS50165">
    <property type="entry name" value="UVRC"/>
    <property type="match status" value="1"/>
</dbReference>
<protein>
    <recommendedName>
        <fullName evidence="1">UvrABC system protein C</fullName>
        <shortName evidence="1">Protein UvrC</shortName>
    </recommendedName>
    <alternativeName>
        <fullName evidence="1">Excinuclease ABC subunit C</fullName>
    </alternativeName>
</protein>
<proteinExistence type="inferred from homology"/>